<accession>Q9LE22</accession>
<sequence length="170" mass="18350">MASANPETAKPTPATVDMANPEELKKVFDQFDSNGDGKISVLELGGVFKAMGTSYTETELNRVLEEVDTDRDGYINLDEFSTLCRSSSSAAEIRDAFDLYDQDKNGLISASELHQVLNRLGMSCSVEDCTRMIGPVDADGDGNVNFEEFQKMMTSSSLLNSNGSAAPPST</sequence>
<organism>
    <name type="scientific">Arabidopsis thaliana</name>
    <name type="common">Mouse-ear cress</name>
    <dbReference type="NCBI Taxonomy" id="3702"/>
    <lineage>
        <taxon>Eukaryota</taxon>
        <taxon>Viridiplantae</taxon>
        <taxon>Streptophyta</taxon>
        <taxon>Embryophyta</taxon>
        <taxon>Tracheophyta</taxon>
        <taxon>Spermatophyta</taxon>
        <taxon>Magnoliopsida</taxon>
        <taxon>eudicotyledons</taxon>
        <taxon>Gunneridae</taxon>
        <taxon>Pentapetalae</taxon>
        <taxon>rosids</taxon>
        <taxon>malvids</taxon>
        <taxon>Brassicales</taxon>
        <taxon>Brassicaceae</taxon>
        <taxon>Camelineae</taxon>
        <taxon>Arabidopsis</taxon>
    </lineage>
</organism>
<evidence type="ECO:0000250" key="1"/>
<evidence type="ECO:0000255" key="2">
    <source>
        <dbReference type="PROSITE-ProRule" id="PRU00448"/>
    </source>
</evidence>
<evidence type="ECO:0000269" key="3">
    <source>
    </source>
</evidence>
<evidence type="ECO:0000305" key="4"/>
<evidence type="ECO:0007744" key="5">
    <source>
    </source>
</evidence>
<proteinExistence type="evidence at protein level"/>
<protein>
    <recommendedName>
        <fullName>Probable calcium-binding protein CML27</fullName>
    </recommendedName>
    <alternativeName>
        <fullName>Calmodulin-like protein 27</fullName>
    </alternativeName>
</protein>
<feature type="initiator methionine" description="Removed" evidence="5">
    <location>
        <position position="1"/>
    </location>
</feature>
<feature type="chain" id="PRO_0000342955" description="Probable calcium-binding protein CML27">
    <location>
        <begin position="2"/>
        <end position="170"/>
    </location>
</feature>
<feature type="domain" description="EF-hand 1" evidence="2">
    <location>
        <begin position="19"/>
        <end position="54"/>
    </location>
</feature>
<feature type="domain" description="EF-hand 2" evidence="2">
    <location>
        <begin position="55"/>
        <end position="85"/>
    </location>
</feature>
<feature type="domain" description="EF-hand 3" evidence="2">
    <location>
        <begin position="88"/>
        <end position="123"/>
    </location>
</feature>
<feature type="domain" description="EF-hand 4" evidence="2">
    <location>
        <begin position="136"/>
        <end position="159"/>
    </location>
</feature>
<feature type="binding site" evidence="2">
    <location>
        <position position="32"/>
    </location>
    <ligand>
        <name>Ca(2+)</name>
        <dbReference type="ChEBI" id="CHEBI:29108"/>
        <label>1</label>
    </ligand>
</feature>
<feature type="binding site" evidence="2">
    <location>
        <position position="34"/>
    </location>
    <ligand>
        <name>Ca(2+)</name>
        <dbReference type="ChEBI" id="CHEBI:29108"/>
        <label>1</label>
    </ligand>
</feature>
<feature type="binding site" evidence="2">
    <location>
        <position position="36"/>
    </location>
    <ligand>
        <name>Ca(2+)</name>
        <dbReference type="ChEBI" id="CHEBI:29108"/>
        <label>1</label>
    </ligand>
</feature>
<feature type="binding site" evidence="2">
    <location>
        <position position="38"/>
    </location>
    <ligand>
        <name>Ca(2+)</name>
        <dbReference type="ChEBI" id="CHEBI:29108"/>
        <label>1</label>
    </ligand>
</feature>
<feature type="binding site" evidence="2">
    <location>
        <position position="43"/>
    </location>
    <ligand>
        <name>Ca(2+)</name>
        <dbReference type="ChEBI" id="CHEBI:29108"/>
        <label>1</label>
    </ligand>
</feature>
<feature type="binding site" evidence="2">
    <location>
        <position position="68"/>
    </location>
    <ligand>
        <name>Ca(2+)</name>
        <dbReference type="ChEBI" id="CHEBI:29108"/>
        <label>2</label>
    </ligand>
</feature>
<feature type="binding site" evidence="2">
    <location>
        <position position="70"/>
    </location>
    <ligand>
        <name>Ca(2+)</name>
        <dbReference type="ChEBI" id="CHEBI:29108"/>
        <label>2</label>
    </ligand>
</feature>
<feature type="binding site" evidence="2">
    <location>
        <position position="72"/>
    </location>
    <ligand>
        <name>Ca(2+)</name>
        <dbReference type="ChEBI" id="CHEBI:29108"/>
        <label>2</label>
    </ligand>
</feature>
<feature type="binding site" evidence="2">
    <location>
        <position position="74"/>
    </location>
    <ligand>
        <name>Ca(2+)</name>
        <dbReference type="ChEBI" id="CHEBI:29108"/>
        <label>2</label>
    </ligand>
</feature>
<feature type="binding site" evidence="2">
    <location>
        <position position="79"/>
    </location>
    <ligand>
        <name>Ca(2+)</name>
        <dbReference type="ChEBI" id="CHEBI:29108"/>
        <label>2</label>
    </ligand>
</feature>
<feature type="binding site" evidence="2">
    <location>
        <position position="101"/>
    </location>
    <ligand>
        <name>Ca(2+)</name>
        <dbReference type="ChEBI" id="CHEBI:29108"/>
        <label>3</label>
    </ligand>
</feature>
<feature type="binding site" evidence="2">
    <location>
        <position position="103"/>
    </location>
    <ligand>
        <name>Ca(2+)</name>
        <dbReference type="ChEBI" id="CHEBI:29108"/>
        <label>3</label>
    </ligand>
</feature>
<feature type="binding site" evidence="2">
    <location>
        <position position="105"/>
    </location>
    <ligand>
        <name>Ca(2+)</name>
        <dbReference type="ChEBI" id="CHEBI:29108"/>
        <label>3</label>
    </ligand>
</feature>
<feature type="binding site" evidence="2">
    <location>
        <position position="112"/>
    </location>
    <ligand>
        <name>Ca(2+)</name>
        <dbReference type="ChEBI" id="CHEBI:29108"/>
        <label>3</label>
    </ligand>
</feature>
<feature type="binding site" evidence="2">
    <location>
        <position position="137"/>
    </location>
    <ligand>
        <name>Ca(2+)</name>
        <dbReference type="ChEBI" id="CHEBI:29108"/>
        <label>4</label>
    </ligand>
</feature>
<feature type="binding site" evidence="2">
    <location>
        <position position="139"/>
    </location>
    <ligand>
        <name>Ca(2+)</name>
        <dbReference type="ChEBI" id="CHEBI:29108"/>
        <label>4</label>
    </ligand>
</feature>
<feature type="binding site" evidence="2">
    <location>
        <position position="141"/>
    </location>
    <ligand>
        <name>Ca(2+)</name>
        <dbReference type="ChEBI" id="CHEBI:29108"/>
        <label>4</label>
    </ligand>
</feature>
<feature type="binding site" evidence="2">
    <location>
        <position position="143"/>
    </location>
    <ligand>
        <name>Ca(2+)</name>
        <dbReference type="ChEBI" id="CHEBI:29108"/>
        <label>4</label>
    </ligand>
</feature>
<feature type="binding site" evidence="2">
    <location>
        <position position="148"/>
    </location>
    <ligand>
        <name>Ca(2+)</name>
        <dbReference type="ChEBI" id="CHEBI:29108"/>
        <label>4</label>
    </ligand>
</feature>
<feature type="modified residue" description="N-acetylalanine" evidence="5">
    <location>
        <position position="2"/>
    </location>
</feature>
<reference key="1">
    <citation type="journal article" date="2000" name="Nature">
        <title>Sequence and analysis of chromosome 1 of the plant Arabidopsis thaliana.</title>
        <authorList>
            <person name="Theologis A."/>
            <person name="Ecker J.R."/>
            <person name="Palm C.J."/>
            <person name="Federspiel N.A."/>
            <person name="Kaul S."/>
            <person name="White O."/>
            <person name="Alonso J."/>
            <person name="Altafi H."/>
            <person name="Araujo R."/>
            <person name="Bowman C.L."/>
            <person name="Brooks S.Y."/>
            <person name="Buehler E."/>
            <person name="Chan A."/>
            <person name="Chao Q."/>
            <person name="Chen H."/>
            <person name="Cheuk R.F."/>
            <person name="Chin C.W."/>
            <person name="Chung M.K."/>
            <person name="Conn L."/>
            <person name="Conway A.B."/>
            <person name="Conway A.R."/>
            <person name="Creasy T.H."/>
            <person name="Dewar K."/>
            <person name="Dunn P."/>
            <person name="Etgu P."/>
            <person name="Feldblyum T.V."/>
            <person name="Feng J.-D."/>
            <person name="Fong B."/>
            <person name="Fujii C.Y."/>
            <person name="Gill J.E."/>
            <person name="Goldsmith A.D."/>
            <person name="Haas B."/>
            <person name="Hansen N.F."/>
            <person name="Hughes B."/>
            <person name="Huizar L."/>
            <person name="Hunter J.L."/>
            <person name="Jenkins J."/>
            <person name="Johnson-Hopson C."/>
            <person name="Khan S."/>
            <person name="Khaykin E."/>
            <person name="Kim C.J."/>
            <person name="Koo H.L."/>
            <person name="Kremenetskaia I."/>
            <person name="Kurtz D.B."/>
            <person name="Kwan A."/>
            <person name="Lam B."/>
            <person name="Langin-Hooper S."/>
            <person name="Lee A."/>
            <person name="Lee J.M."/>
            <person name="Lenz C.A."/>
            <person name="Li J.H."/>
            <person name="Li Y.-P."/>
            <person name="Lin X."/>
            <person name="Liu S.X."/>
            <person name="Liu Z.A."/>
            <person name="Luros J.S."/>
            <person name="Maiti R."/>
            <person name="Marziali A."/>
            <person name="Militscher J."/>
            <person name="Miranda M."/>
            <person name="Nguyen M."/>
            <person name="Nierman W.C."/>
            <person name="Osborne B.I."/>
            <person name="Pai G."/>
            <person name="Peterson J."/>
            <person name="Pham P.K."/>
            <person name="Rizzo M."/>
            <person name="Rooney T."/>
            <person name="Rowley D."/>
            <person name="Sakano H."/>
            <person name="Salzberg S.L."/>
            <person name="Schwartz J.R."/>
            <person name="Shinn P."/>
            <person name="Southwick A.M."/>
            <person name="Sun H."/>
            <person name="Tallon L.J."/>
            <person name="Tambunga G."/>
            <person name="Toriumi M.J."/>
            <person name="Town C.D."/>
            <person name="Utterback T."/>
            <person name="Van Aken S."/>
            <person name="Vaysberg M."/>
            <person name="Vysotskaia V.S."/>
            <person name="Walker M."/>
            <person name="Wu D."/>
            <person name="Yu G."/>
            <person name="Fraser C.M."/>
            <person name="Venter J.C."/>
            <person name="Davis R.W."/>
        </authorList>
    </citation>
    <scope>NUCLEOTIDE SEQUENCE [LARGE SCALE GENOMIC DNA]</scope>
    <source>
        <strain>cv. Columbia</strain>
    </source>
</reference>
<reference key="2">
    <citation type="journal article" date="2017" name="Plant J.">
        <title>Araport11: a complete reannotation of the Arabidopsis thaliana reference genome.</title>
        <authorList>
            <person name="Cheng C.Y."/>
            <person name="Krishnakumar V."/>
            <person name="Chan A.P."/>
            <person name="Thibaud-Nissen F."/>
            <person name="Schobel S."/>
            <person name="Town C.D."/>
        </authorList>
    </citation>
    <scope>GENOME REANNOTATION</scope>
    <source>
        <strain>cv. Columbia</strain>
    </source>
</reference>
<reference key="3">
    <citation type="journal article" date="2003" name="Science">
        <title>Empirical analysis of transcriptional activity in the Arabidopsis genome.</title>
        <authorList>
            <person name="Yamada K."/>
            <person name="Lim J."/>
            <person name="Dale J.M."/>
            <person name="Chen H."/>
            <person name="Shinn P."/>
            <person name="Palm C.J."/>
            <person name="Southwick A.M."/>
            <person name="Wu H.C."/>
            <person name="Kim C.J."/>
            <person name="Nguyen M."/>
            <person name="Pham P.K."/>
            <person name="Cheuk R.F."/>
            <person name="Karlin-Newmann G."/>
            <person name="Liu S.X."/>
            <person name="Lam B."/>
            <person name="Sakano H."/>
            <person name="Wu T."/>
            <person name="Yu G."/>
            <person name="Miranda M."/>
            <person name="Quach H.L."/>
            <person name="Tripp M."/>
            <person name="Chang C.H."/>
            <person name="Lee J.M."/>
            <person name="Toriumi M.J."/>
            <person name="Chan M.M."/>
            <person name="Tang C.C."/>
            <person name="Onodera C.S."/>
            <person name="Deng J.M."/>
            <person name="Akiyama K."/>
            <person name="Ansari Y."/>
            <person name="Arakawa T."/>
            <person name="Banh J."/>
            <person name="Banno F."/>
            <person name="Bowser L."/>
            <person name="Brooks S.Y."/>
            <person name="Carninci P."/>
            <person name="Chao Q."/>
            <person name="Choy N."/>
            <person name="Enju A."/>
            <person name="Goldsmith A.D."/>
            <person name="Gurjal M."/>
            <person name="Hansen N.F."/>
            <person name="Hayashizaki Y."/>
            <person name="Johnson-Hopson C."/>
            <person name="Hsuan V.W."/>
            <person name="Iida K."/>
            <person name="Karnes M."/>
            <person name="Khan S."/>
            <person name="Koesema E."/>
            <person name="Ishida J."/>
            <person name="Jiang P.X."/>
            <person name="Jones T."/>
            <person name="Kawai J."/>
            <person name="Kamiya A."/>
            <person name="Meyers C."/>
            <person name="Nakajima M."/>
            <person name="Narusaka M."/>
            <person name="Seki M."/>
            <person name="Sakurai T."/>
            <person name="Satou M."/>
            <person name="Tamse R."/>
            <person name="Vaysberg M."/>
            <person name="Wallender E.K."/>
            <person name="Wong C."/>
            <person name="Yamamura Y."/>
            <person name="Yuan S."/>
            <person name="Shinozaki K."/>
            <person name="Davis R.W."/>
            <person name="Theologis A."/>
            <person name="Ecker J.R."/>
        </authorList>
    </citation>
    <scope>NUCLEOTIDE SEQUENCE [LARGE SCALE MRNA]</scope>
    <source>
        <strain>cv. Columbia</strain>
    </source>
</reference>
<reference key="4">
    <citation type="submission" date="2006-07" db="EMBL/GenBank/DDBJ databases">
        <title>Large-scale analysis of RIKEN Arabidopsis full-length (RAFL) cDNAs.</title>
        <authorList>
            <person name="Totoki Y."/>
            <person name="Seki M."/>
            <person name="Ishida J."/>
            <person name="Nakajima M."/>
            <person name="Enju A."/>
            <person name="Kamiya A."/>
            <person name="Narusaka M."/>
            <person name="Shin-i T."/>
            <person name="Nakagawa M."/>
            <person name="Sakamoto N."/>
            <person name="Oishi K."/>
            <person name="Kohara Y."/>
            <person name="Kobayashi M."/>
            <person name="Toyoda A."/>
            <person name="Sakaki Y."/>
            <person name="Sakurai T."/>
            <person name="Iida K."/>
            <person name="Akiyama K."/>
            <person name="Satou M."/>
            <person name="Toyoda T."/>
            <person name="Konagaya A."/>
            <person name="Carninci P."/>
            <person name="Kawai J."/>
            <person name="Hayashizaki Y."/>
            <person name="Shinozaki K."/>
        </authorList>
    </citation>
    <scope>NUCLEOTIDE SEQUENCE [LARGE SCALE MRNA]</scope>
    <source>
        <strain>cv. Columbia</strain>
    </source>
</reference>
<reference key="5">
    <citation type="journal article" date="2003" name="New Phytol.">
        <title>Calmodulins and related potential calcium sensors of Arabidopsis.</title>
        <authorList>
            <person name="McCormack E."/>
            <person name="Braam J."/>
        </authorList>
    </citation>
    <scope>GENE FAMILY</scope>
    <scope>NOMENCLATURE</scope>
</reference>
<reference key="6">
    <citation type="journal article" date="2005" name="New Phytol.">
        <title>Genome-wide identification of touch- and darkness-regulated Arabidopsis genes: a focus on calmodulin-like and XTH genes.</title>
        <authorList>
            <person name="Lee D."/>
            <person name="Polisensky D.H."/>
            <person name="Braam J."/>
        </authorList>
    </citation>
    <scope>INDUCTION</scope>
</reference>
<reference key="7">
    <citation type="journal article" date="2009" name="J. Proteomics">
        <title>Phosphoproteomic analysis of nuclei-enriched fractions from Arabidopsis thaliana.</title>
        <authorList>
            <person name="Jones A.M.E."/>
            <person name="MacLean D."/>
            <person name="Studholme D.J."/>
            <person name="Serna-Sanz A."/>
            <person name="Andreasson E."/>
            <person name="Rathjen J.P."/>
            <person name="Peck S.C."/>
        </authorList>
    </citation>
    <scope>IDENTIFICATION BY MASS SPECTROMETRY [LARGE SCALE ANALYSIS]</scope>
    <source>
        <strain>cv. Columbia</strain>
    </source>
</reference>
<reference key="8">
    <citation type="journal article" date="2009" name="Plant Physiol.">
        <title>Large-scale Arabidopsis phosphoproteome profiling reveals novel chloroplast kinase substrates and phosphorylation networks.</title>
        <authorList>
            <person name="Reiland S."/>
            <person name="Messerli G."/>
            <person name="Baerenfaller K."/>
            <person name="Gerrits B."/>
            <person name="Endler A."/>
            <person name="Grossmann J."/>
            <person name="Gruissem W."/>
            <person name="Baginsky S."/>
        </authorList>
    </citation>
    <scope>IDENTIFICATION BY MASS SPECTROMETRY [LARGE SCALE ANALYSIS]</scope>
</reference>
<reference key="9">
    <citation type="journal article" date="2012" name="Mol. Cell. Proteomics">
        <title>Comparative large-scale characterisation of plant vs. mammal proteins reveals similar and idiosyncratic N-alpha acetylation features.</title>
        <authorList>
            <person name="Bienvenut W.V."/>
            <person name="Sumpton D."/>
            <person name="Martinez A."/>
            <person name="Lilla S."/>
            <person name="Espagne C."/>
            <person name="Meinnel T."/>
            <person name="Giglione C."/>
        </authorList>
    </citation>
    <scope>ACETYLATION [LARGE SCALE ANALYSIS] AT ALA-2</scope>
    <scope>CLEAVAGE OF INITIATOR METHIONINE [LARGE SCALE ANALYSIS]</scope>
    <scope>IDENTIFICATION BY MASS SPECTROMETRY [LARGE SCALE ANALYSIS]</scope>
</reference>
<keyword id="KW-0007">Acetylation</keyword>
<keyword id="KW-0106">Calcium</keyword>
<keyword id="KW-0479">Metal-binding</keyword>
<keyword id="KW-1185">Reference proteome</keyword>
<keyword id="KW-0677">Repeat</keyword>
<comment type="function">
    <text evidence="1">Potential calcium sensor.</text>
</comment>
<comment type="induction">
    <text evidence="3">By touch.</text>
</comment>
<comment type="caution">
    <text evidence="4">Although assigned as a calmodulin family member by Ref.5, it only contains EF-hand domains.</text>
</comment>
<gene>
    <name type="primary">CML27</name>
    <name type="ordered locus">At1g18210</name>
    <name type="ORF">T10F20.22</name>
    <name type="ORF">T10O22.19</name>
</gene>
<name>CML27_ARATH</name>
<dbReference type="EMBL" id="AC034107">
    <property type="protein sequence ID" value="AAF97837.1"/>
    <property type="molecule type" value="Genomic_DNA"/>
</dbReference>
<dbReference type="EMBL" id="AC069551">
    <property type="protein sequence ID" value="AAF78384.1"/>
    <property type="molecule type" value="Genomic_DNA"/>
</dbReference>
<dbReference type="EMBL" id="CP002684">
    <property type="protein sequence ID" value="AEE29687.1"/>
    <property type="molecule type" value="Genomic_DNA"/>
</dbReference>
<dbReference type="EMBL" id="CP002684">
    <property type="protein sequence ID" value="AEE29688.1"/>
    <property type="molecule type" value="Genomic_DNA"/>
</dbReference>
<dbReference type="EMBL" id="AY045805">
    <property type="protein sequence ID" value="AAK76479.1"/>
    <property type="molecule type" value="mRNA"/>
</dbReference>
<dbReference type="EMBL" id="AY079394">
    <property type="protein sequence ID" value="AAL85125.1"/>
    <property type="molecule type" value="mRNA"/>
</dbReference>
<dbReference type="EMBL" id="AK229367">
    <property type="protein sequence ID" value="BAF01230.1"/>
    <property type="molecule type" value="mRNA"/>
</dbReference>
<dbReference type="PIR" id="A86317">
    <property type="entry name" value="A86317"/>
</dbReference>
<dbReference type="RefSeq" id="NP_173259.1">
    <property type="nucleotide sequence ID" value="NM_101681.3"/>
</dbReference>
<dbReference type="RefSeq" id="NP_849686.1">
    <property type="nucleotide sequence ID" value="NM_179355.1"/>
</dbReference>
<dbReference type="SMR" id="Q9LE22"/>
<dbReference type="BioGRID" id="23640">
    <property type="interactions" value="1"/>
</dbReference>
<dbReference type="FunCoup" id="Q9LE22">
    <property type="interactions" value="391"/>
</dbReference>
<dbReference type="IntAct" id="Q9LE22">
    <property type="interactions" value="1"/>
</dbReference>
<dbReference type="STRING" id="3702.Q9LE22"/>
<dbReference type="GlyGen" id="Q9LE22">
    <property type="glycosylation" value="1 site"/>
</dbReference>
<dbReference type="iPTMnet" id="Q9LE22"/>
<dbReference type="MetOSite" id="Q9LE22"/>
<dbReference type="PaxDb" id="3702-AT1G18210.1"/>
<dbReference type="ProteomicsDB" id="241001"/>
<dbReference type="EnsemblPlants" id="AT1G18210.1">
    <property type="protein sequence ID" value="AT1G18210.1"/>
    <property type="gene ID" value="AT1G18210"/>
</dbReference>
<dbReference type="EnsemblPlants" id="AT1G18210.2">
    <property type="protein sequence ID" value="AT1G18210.2"/>
    <property type="gene ID" value="AT1G18210"/>
</dbReference>
<dbReference type="GeneID" id="838401"/>
<dbReference type="Gramene" id="AT1G18210.1">
    <property type="protein sequence ID" value="AT1G18210.1"/>
    <property type="gene ID" value="AT1G18210"/>
</dbReference>
<dbReference type="Gramene" id="AT1G18210.2">
    <property type="protein sequence ID" value="AT1G18210.2"/>
    <property type="gene ID" value="AT1G18210"/>
</dbReference>
<dbReference type="KEGG" id="ath:AT1G18210"/>
<dbReference type="Araport" id="AT1G18210"/>
<dbReference type="TAIR" id="AT1G18210"/>
<dbReference type="eggNOG" id="KOG0027">
    <property type="taxonomic scope" value="Eukaryota"/>
</dbReference>
<dbReference type="HOGENOM" id="CLU_061288_20_7_1"/>
<dbReference type="InParanoid" id="Q9LE22"/>
<dbReference type="OMA" id="DCTRMIG"/>
<dbReference type="OrthoDB" id="26525at2759"/>
<dbReference type="PhylomeDB" id="Q9LE22"/>
<dbReference type="PRO" id="PR:Q9LE22"/>
<dbReference type="Proteomes" id="UP000006548">
    <property type="component" value="Chromosome 1"/>
</dbReference>
<dbReference type="ExpressionAtlas" id="Q9LE22">
    <property type="expression patterns" value="baseline and differential"/>
</dbReference>
<dbReference type="GO" id="GO:0005829">
    <property type="term" value="C:cytosol"/>
    <property type="evidence" value="ECO:0007005"/>
    <property type="project" value="TAIR"/>
</dbReference>
<dbReference type="GO" id="GO:0005634">
    <property type="term" value="C:nucleus"/>
    <property type="evidence" value="ECO:0007005"/>
    <property type="project" value="TAIR"/>
</dbReference>
<dbReference type="GO" id="GO:0000325">
    <property type="term" value="C:plant-type vacuole"/>
    <property type="evidence" value="ECO:0007005"/>
    <property type="project" value="TAIR"/>
</dbReference>
<dbReference type="GO" id="GO:0005509">
    <property type="term" value="F:calcium ion binding"/>
    <property type="evidence" value="ECO:0007669"/>
    <property type="project" value="InterPro"/>
</dbReference>
<dbReference type="CDD" id="cd00051">
    <property type="entry name" value="EFh"/>
    <property type="match status" value="2"/>
</dbReference>
<dbReference type="FunFam" id="1.10.238.10:FF:000203">
    <property type="entry name" value="Probable calcium-binding protein CML27"/>
    <property type="match status" value="1"/>
</dbReference>
<dbReference type="FunFam" id="1.10.238.10:FF:000275">
    <property type="entry name" value="Probable calcium-binding protein CML27"/>
    <property type="match status" value="1"/>
</dbReference>
<dbReference type="Gene3D" id="1.10.238.10">
    <property type="entry name" value="EF-hand"/>
    <property type="match status" value="2"/>
</dbReference>
<dbReference type="InterPro" id="IPR011992">
    <property type="entry name" value="EF-hand-dom_pair"/>
</dbReference>
<dbReference type="InterPro" id="IPR018247">
    <property type="entry name" value="EF_Hand_1_Ca_BS"/>
</dbReference>
<dbReference type="InterPro" id="IPR002048">
    <property type="entry name" value="EF_hand_dom"/>
</dbReference>
<dbReference type="InterPro" id="IPR039647">
    <property type="entry name" value="EF_hand_pair_protein_CML-like"/>
</dbReference>
<dbReference type="PANTHER" id="PTHR10891">
    <property type="entry name" value="EF-HAND CALCIUM-BINDING DOMAIN CONTAINING PROTEIN"/>
    <property type="match status" value="1"/>
</dbReference>
<dbReference type="Pfam" id="PF13499">
    <property type="entry name" value="EF-hand_7"/>
    <property type="match status" value="2"/>
</dbReference>
<dbReference type="SMART" id="SM00054">
    <property type="entry name" value="EFh"/>
    <property type="match status" value="4"/>
</dbReference>
<dbReference type="SUPFAM" id="SSF47473">
    <property type="entry name" value="EF-hand"/>
    <property type="match status" value="1"/>
</dbReference>
<dbReference type="PROSITE" id="PS00018">
    <property type="entry name" value="EF_HAND_1"/>
    <property type="match status" value="4"/>
</dbReference>
<dbReference type="PROSITE" id="PS50222">
    <property type="entry name" value="EF_HAND_2"/>
    <property type="match status" value="4"/>
</dbReference>